<evidence type="ECO:0000303" key="1">
    <source>
    </source>
</evidence>
<evidence type="ECO:0000305" key="2"/>
<evidence type="ECO:0000305" key="3">
    <source>
    </source>
</evidence>
<evidence type="ECO:0000312" key="4">
    <source>
        <dbReference type="HGNC" id="HGNC:34224"/>
    </source>
</evidence>
<keyword id="KW-0416">Keratin</keyword>
<keyword id="KW-1185">Reference proteome</keyword>
<keyword id="KW-0677">Repeat</keyword>
<feature type="chain" id="PRO_0000445145" description="Small cysteine and glycine repeat-containing protein 5">
    <location>
        <begin position="1"/>
        <end position="85"/>
    </location>
</feature>
<feature type="region of interest" description="10 X 2 AA repeats of CG" evidence="2">
    <location>
        <begin position="4"/>
        <end position="69"/>
    </location>
</feature>
<dbReference type="EMBL" id="AC064853">
    <property type="status" value="NOT_ANNOTATED_CDS"/>
    <property type="molecule type" value="Genomic_DNA"/>
</dbReference>
<dbReference type="CCDS" id="CCDS92956.1"/>
<dbReference type="RefSeq" id="NP_001382335.1">
    <property type="nucleotide sequence ID" value="NM_001395406.1"/>
</dbReference>
<dbReference type="BioMuta" id="ENSG00000284667"/>
<dbReference type="MassIVE" id="A0A286YF46"/>
<dbReference type="PeptideAtlas" id="A0A286YF46"/>
<dbReference type="Ensembl" id="ENST00000641976.1">
    <property type="protein sequence ID" value="ENSP00000493101.1"/>
    <property type="gene ID" value="ENSG00000284667.1"/>
</dbReference>
<dbReference type="GeneID" id="112441437"/>
<dbReference type="MANE-Select" id="ENST00000641976.1">
    <property type="protein sequence ID" value="ENSP00000493101.1"/>
    <property type="RefSeq nucleotide sequence ID" value="NM_001395406.1"/>
    <property type="RefSeq protein sequence ID" value="NP_001382335.1"/>
</dbReference>
<dbReference type="AGR" id="HGNC:34224"/>
<dbReference type="GeneCards" id="SCYGR5"/>
<dbReference type="HGNC" id="HGNC:34224">
    <property type="gene designation" value="SCYGR5"/>
</dbReference>
<dbReference type="HPA" id="ENSG00000284667">
    <property type="expression patterns" value="Not detected"/>
</dbReference>
<dbReference type="neXtProt" id="NX_A0A286YF46"/>
<dbReference type="VEuPathDB" id="HostDB:ENSG00000284667"/>
<dbReference type="GeneTree" id="ENSGT00910000147673"/>
<dbReference type="InParanoid" id="A0A286YF46"/>
<dbReference type="OMA" id="TCCSCGC"/>
<dbReference type="PAN-GO" id="A0A286YF46">
    <property type="GO annotations" value="0 GO annotations based on evolutionary models"/>
</dbReference>
<dbReference type="Pharos" id="A0A286YF46">
    <property type="development level" value="Tdark"/>
</dbReference>
<dbReference type="PRO" id="PR:A0A286YF46"/>
<dbReference type="Proteomes" id="UP000005640">
    <property type="component" value="Chromosome 2"/>
</dbReference>
<dbReference type="Bgee" id="ENSG00000284667">
    <property type="expression patterns" value="Expressed in prefrontal cortex and 34 other cell types or tissues"/>
</dbReference>
<dbReference type="GO" id="GO:0005882">
    <property type="term" value="C:intermediate filament"/>
    <property type="evidence" value="ECO:0007669"/>
    <property type="project" value="UniProtKB-KW"/>
</dbReference>
<comment type="function">
    <text evidence="2">In the hair cortex, hair keratin intermediate filaments are embedded in an interfilamentous matrix, consisting of hair keratin-associated proteins (KRTAP), which are essential for the formation of a rigid and resistant hair shaft through their extensive disulfide bond cross-linking with abundant cysteine residues of hair keratins. The matrix proteins include the high-sulfur and high-glycine-tyrosine keratins.</text>
</comment>
<comment type="miscellaneous">
    <text evidence="1">Human have a similar number of genes as other primates despite the relative hairlessness of humans.</text>
</comment>
<comment type="similarity">
    <text evidence="3">Belongs to the KRTAP type 28 family.</text>
</comment>
<name>SCGR5_HUMAN</name>
<proteinExistence type="evidence at protein level"/>
<reference key="1">
    <citation type="journal article" date="2005" name="Nature">
        <title>Generation and annotation of the DNA sequences of human chromosomes 2 and 4.</title>
        <authorList>
            <person name="Hillier L.W."/>
            <person name="Graves T.A."/>
            <person name="Fulton R.S."/>
            <person name="Fulton L.A."/>
            <person name="Pepin K.H."/>
            <person name="Minx P."/>
            <person name="Wagner-McPherson C."/>
            <person name="Layman D."/>
            <person name="Wylie K."/>
            <person name="Sekhon M."/>
            <person name="Becker M.C."/>
            <person name="Fewell G.A."/>
            <person name="Delehaunty K.D."/>
            <person name="Miner T.L."/>
            <person name="Nash W.E."/>
            <person name="Kremitzki C."/>
            <person name="Oddy L."/>
            <person name="Du H."/>
            <person name="Sun H."/>
            <person name="Bradshaw-Cordum H."/>
            <person name="Ali J."/>
            <person name="Carter J."/>
            <person name="Cordes M."/>
            <person name="Harris A."/>
            <person name="Isak A."/>
            <person name="van Brunt A."/>
            <person name="Nguyen C."/>
            <person name="Du F."/>
            <person name="Courtney L."/>
            <person name="Kalicki J."/>
            <person name="Ozersky P."/>
            <person name="Abbott S."/>
            <person name="Armstrong J."/>
            <person name="Belter E.A."/>
            <person name="Caruso L."/>
            <person name="Cedroni M."/>
            <person name="Cotton M."/>
            <person name="Davidson T."/>
            <person name="Desai A."/>
            <person name="Elliott G."/>
            <person name="Erb T."/>
            <person name="Fronick C."/>
            <person name="Gaige T."/>
            <person name="Haakenson W."/>
            <person name="Haglund K."/>
            <person name="Holmes A."/>
            <person name="Harkins R."/>
            <person name="Kim K."/>
            <person name="Kruchowski S.S."/>
            <person name="Strong C.M."/>
            <person name="Grewal N."/>
            <person name="Goyea E."/>
            <person name="Hou S."/>
            <person name="Levy A."/>
            <person name="Martinka S."/>
            <person name="Mead K."/>
            <person name="McLellan M.D."/>
            <person name="Meyer R."/>
            <person name="Randall-Maher J."/>
            <person name="Tomlinson C."/>
            <person name="Dauphin-Kohlberg S."/>
            <person name="Kozlowicz-Reilly A."/>
            <person name="Shah N."/>
            <person name="Swearengen-Shahid S."/>
            <person name="Snider J."/>
            <person name="Strong J.T."/>
            <person name="Thompson J."/>
            <person name="Yoakum M."/>
            <person name="Leonard S."/>
            <person name="Pearman C."/>
            <person name="Trani L."/>
            <person name="Radionenko M."/>
            <person name="Waligorski J.E."/>
            <person name="Wang C."/>
            <person name="Rock S.M."/>
            <person name="Tin-Wollam A.-M."/>
            <person name="Maupin R."/>
            <person name="Latreille P."/>
            <person name="Wendl M.C."/>
            <person name="Yang S.-P."/>
            <person name="Pohl C."/>
            <person name="Wallis J.W."/>
            <person name="Spieth J."/>
            <person name="Bieri T.A."/>
            <person name="Berkowicz N."/>
            <person name="Nelson J.O."/>
            <person name="Osborne J."/>
            <person name="Ding L."/>
            <person name="Meyer R."/>
            <person name="Sabo A."/>
            <person name="Shotland Y."/>
            <person name="Sinha P."/>
            <person name="Wohldmann P.E."/>
            <person name="Cook L.L."/>
            <person name="Hickenbotham M.T."/>
            <person name="Eldred J."/>
            <person name="Williams D."/>
            <person name="Jones T.A."/>
            <person name="She X."/>
            <person name="Ciccarelli F.D."/>
            <person name="Izaurralde E."/>
            <person name="Taylor J."/>
            <person name="Schmutz J."/>
            <person name="Myers R.M."/>
            <person name="Cox D.R."/>
            <person name="Huang X."/>
            <person name="McPherson J.D."/>
            <person name="Mardis E.R."/>
            <person name="Clifton S.W."/>
            <person name="Warren W.C."/>
            <person name="Chinwalla A.T."/>
            <person name="Eddy S.R."/>
            <person name="Marra M.A."/>
            <person name="Ovcharenko I."/>
            <person name="Furey T.S."/>
            <person name="Miller W."/>
            <person name="Eichler E.E."/>
            <person name="Bork P."/>
            <person name="Suyama M."/>
            <person name="Torrents D."/>
            <person name="Waterston R.H."/>
            <person name="Wilson R.K."/>
        </authorList>
    </citation>
    <scope>NUCLEOTIDE SEQUENCE [LARGE SCALE GENOMIC DNA]</scope>
</reference>
<reference key="2">
    <citation type="journal article" date="2008" name="BMC Evol. Biol.">
        <title>Molecular evolution of the keratin associated protein gene family in mammals, role in the evolution of mammalian hair.</title>
        <authorList>
            <person name="Wu D.D."/>
            <person name="Irwin D.M."/>
            <person name="Zhang Y.P."/>
        </authorList>
    </citation>
    <scope>FAMILY CHARACTERIZATION</scope>
</reference>
<organism>
    <name type="scientific">Homo sapiens</name>
    <name type="common">Human</name>
    <dbReference type="NCBI Taxonomy" id="9606"/>
    <lineage>
        <taxon>Eukaryota</taxon>
        <taxon>Metazoa</taxon>
        <taxon>Chordata</taxon>
        <taxon>Craniata</taxon>
        <taxon>Vertebrata</taxon>
        <taxon>Euteleostomi</taxon>
        <taxon>Mammalia</taxon>
        <taxon>Eutheria</taxon>
        <taxon>Euarchontoglires</taxon>
        <taxon>Primates</taxon>
        <taxon>Haplorrhini</taxon>
        <taxon>Catarrhini</taxon>
        <taxon>Hominidae</taxon>
        <taxon>Homo</taxon>
    </lineage>
</organism>
<gene>
    <name evidence="4" type="primary">SCYGR5</name>
    <name evidence="1" type="synonym">KRTAP28-5</name>
</gene>
<protein>
    <recommendedName>
        <fullName evidence="2">Small cysteine and glycine repeat-containing protein 5</fullName>
    </recommendedName>
    <alternativeName>
        <fullName evidence="1">Keratin-associated protein 28-5</fullName>
    </alternativeName>
</protein>
<accession>A0A286YF46</accession>
<sequence length="85" mass="8201">MGCCGCGGCGGCGGGCGGGCGSCTTCRCYRVGCCSSCCPCCRGCCGGCCSTPVICCCRRTCCSCGCGCGKGCCQQKGCCQKQCCC</sequence>